<evidence type="ECO:0000255" key="1">
    <source>
        <dbReference type="HAMAP-Rule" id="MF_01013"/>
    </source>
</evidence>
<protein>
    <recommendedName>
        <fullName evidence="1">Imidazole glycerol phosphate synthase subunit HisF</fullName>
        <ecNumber evidence="1">4.3.2.10</ecNumber>
    </recommendedName>
    <alternativeName>
        <fullName evidence="1">IGP synthase cyclase subunit</fullName>
    </alternativeName>
    <alternativeName>
        <fullName evidence="1">IGP synthase subunit HisF</fullName>
    </alternativeName>
    <alternativeName>
        <fullName evidence="1">ImGP synthase subunit HisF</fullName>
        <shortName evidence="1">IGPS subunit HisF</shortName>
    </alternativeName>
</protein>
<dbReference type="EC" id="4.3.2.10" evidence="1"/>
<dbReference type="EMBL" id="CP000855">
    <property type="protein sequence ID" value="ACJ16372.1"/>
    <property type="molecule type" value="Genomic_DNA"/>
</dbReference>
<dbReference type="RefSeq" id="WP_012571844.1">
    <property type="nucleotide sequence ID" value="NC_011529.1"/>
</dbReference>
<dbReference type="SMR" id="B6YWA9"/>
<dbReference type="STRING" id="523850.TON_0884"/>
<dbReference type="GeneID" id="7017187"/>
<dbReference type="KEGG" id="ton:TON_0884"/>
<dbReference type="PATRIC" id="fig|523850.10.peg.892"/>
<dbReference type="eggNOG" id="arCOG00617">
    <property type="taxonomic scope" value="Archaea"/>
</dbReference>
<dbReference type="HOGENOM" id="CLU_048577_4_0_2"/>
<dbReference type="OrthoDB" id="6261at2157"/>
<dbReference type="UniPathway" id="UPA00031">
    <property type="reaction ID" value="UER00010"/>
</dbReference>
<dbReference type="Proteomes" id="UP000002727">
    <property type="component" value="Chromosome"/>
</dbReference>
<dbReference type="GO" id="GO:0005737">
    <property type="term" value="C:cytoplasm"/>
    <property type="evidence" value="ECO:0007669"/>
    <property type="project" value="UniProtKB-SubCell"/>
</dbReference>
<dbReference type="GO" id="GO:0000107">
    <property type="term" value="F:imidazoleglycerol-phosphate synthase activity"/>
    <property type="evidence" value="ECO:0007669"/>
    <property type="project" value="UniProtKB-UniRule"/>
</dbReference>
<dbReference type="GO" id="GO:0016829">
    <property type="term" value="F:lyase activity"/>
    <property type="evidence" value="ECO:0007669"/>
    <property type="project" value="UniProtKB-KW"/>
</dbReference>
<dbReference type="GO" id="GO:0000105">
    <property type="term" value="P:L-histidine biosynthetic process"/>
    <property type="evidence" value="ECO:0007669"/>
    <property type="project" value="UniProtKB-UniRule"/>
</dbReference>
<dbReference type="CDD" id="cd04731">
    <property type="entry name" value="HisF"/>
    <property type="match status" value="1"/>
</dbReference>
<dbReference type="FunFam" id="3.20.20.70:FF:000006">
    <property type="entry name" value="Imidazole glycerol phosphate synthase subunit HisF"/>
    <property type="match status" value="1"/>
</dbReference>
<dbReference type="Gene3D" id="3.20.20.70">
    <property type="entry name" value="Aldolase class I"/>
    <property type="match status" value="1"/>
</dbReference>
<dbReference type="HAMAP" id="MF_01013">
    <property type="entry name" value="HisF"/>
    <property type="match status" value="1"/>
</dbReference>
<dbReference type="InterPro" id="IPR013785">
    <property type="entry name" value="Aldolase_TIM"/>
</dbReference>
<dbReference type="InterPro" id="IPR006062">
    <property type="entry name" value="His_biosynth"/>
</dbReference>
<dbReference type="InterPro" id="IPR004651">
    <property type="entry name" value="HisF"/>
</dbReference>
<dbReference type="InterPro" id="IPR050064">
    <property type="entry name" value="IGPS_HisA/HisF"/>
</dbReference>
<dbReference type="InterPro" id="IPR011060">
    <property type="entry name" value="RibuloseP-bd_barrel"/>
</dbReference>
<dbReference type="NCBIfam" id="TIGR00735">
    <property type="entry name" value="hisF"/>
    <property type="match status" value="1"/>
</dbReference>
<dbReference type="PANTHER" id="PTHR21235:SF2">
    <property type="entry name" value="IMIDAZOLE GLYCEROL PHOSPHATE SYNTHASE HISHF"/>
    <property type="match status" value="1"/>
</dbReference>
<dbReference type="PANTHER" id="PTHR21235">
    <property type="entry name" value="IMIDAZOLE GLYCEROL PHOSPHATE SYNTHASE SUBUNIT HISF/H IGP SYNTHASE SUBUNIT HISF/H"/>
    <property type="match status" value="1"/>
</dbReference>
<dbReference type="Pfam" id="PF00977">
    <property type="entry name" value="His_biosynth"/>
    <property type="match status" value="1"/>
</dbReference>
<dbReference type="SUPFAM" id="SSF51366">
    <property type="entry name" value="Ribulose-phoshate binding barrel"/>
    <property type="match status" value="1"/>
</dbReference>
<sequence length="252" mass="27736">MLAKRIIAALDIKEGRVVKGIKFQNIRDAGDPIELARRYEEEGIDEIVFLDITASFEKRKILLDLVKRIAEEIYVPFTVGGGIKSVEEIREIIKSGADKVFLNTAAVNNPELVREAAKVVGSANLVIAIDAKWNGEYWEVYTHGGRKARGINAVEWAKEVERLGAGEILLTSMDTDGTQEGFDIPLTKAIVEAVDIPVIASGGAGSPEHFYEAFKIGAEAALAASIFHYGKYTVRELKEYLAEKGIPVRLNY</sequence>
<comment type="function">
    <text evidence="1">IGPS catalyzes the conversion of PRFAR and glutamine to IGP, AICAR and glutamate. The HisF subunit catalyzes the cyclization activity that produces IGP and AICAR from PRFAR using the ammonia provided by the HisH subunit.</text>
</comment>
<comment type="catalytic activity">
    <reaction evidence="1">
        <text>5-[(5-phospho-1-deoxy-D-ribulos-1-ylimino)methylamino]-1-(5-phospho-beta-D-ribosyl)imidazole-4-carboxamide + L-glutamine = D-erythro-1-(imidazol-4-yl)glycerol 3-phosphate + 5-amino-1-(5-phospho-beta-D-ribosyl)imidazole-4-carboxamide + L-glutamate + H(+)</text>
        <dbReference type="Rhea" id="RHEA:24793"/>
        <dbReference type="ChEBI" id="CHEBI:15378"/>
        <dbReference type="ChEBI" id="CHEBI:29985"/>
        <dbReference type="ChEBI" id="CHEBI:58278"/>
        <dbReference type="ChEBI" id="CHEBI:58359"/>
        <dbReference type="ChEBI" id="CHEBI:58475"/>
        <dbReference type="ChEBI" id="CHEBI:58525"/>
        <dbReference type="EC" id="4.3.2.10"/>
    </reaction>
</comment>
<comment type="pathway">
    <text evidence="1">Amino-acid biosynthesis; L-histidine biosynthesis; L-histidine from 5-phospho-alpha-D-ribose 1-diphosphate: step 5/9.</text>
</comment>
<comment type="subunit">
    <text evidence="1">Heterodimer of HisH and HisF.</text>
</comment>
<comment type="subcellular location">
    <subcellularLocation>
        <location evidence="1">Cytoplasm</location>
    </subcellularLocation>
</comment>
<comment type="similarity">
    <text evidence="1">Belongs to the HisA/HisF family.</text>
</comment>
<gene>
    <name evidence="1" type="primary">hisF</name>
    <name type="ordered locus">TON_0884</name>
</gene>
<proteinExistence type="inferred from homology"/>
<accession>B6YWA9</accession>
<organism>
    <name type="scientific">Thermococcus onnurineus (strain NA1)</name>
    <dbReference type="NCBI Taxonomy" id="523850"/>
    <lineage>
        <taxon>Archaea</taxon>
        <taxon>Methanobacteriati</taxon>
        <taxon>Methanobacteriota</taxon>
        <taxon>Thermococci</taxon>
        <taxon>Thermococcales</taxon>
        <taxon>Thermococcaceae</taxon>
        <taxon>Thermococcus</taxon>
    </lineage>
</organism>
<feature type="chain" id="PRO_1000135053" description="Imidazole glycerol phosphate synthase subunit HisF">
    <location>
        <begin position="1"/>
        <end position="252"/>
    </location>
</feature>
<feature type="active site" evidence="1">
    <location>
        <position position="11"/>
    </location>
</feature>
<feature type="active site" evidence="1">
    <location>
        <position position="130"/>
    </location>
</feature>
<name>HIS6_THEON</name>
<keyword id="KW-0028">Amino-acid biosynthesis</keyword>
<keyword id="KW-0963">Cytoplasm</keyword>
<keyword id="KW-0368">Histidine biosynthesis</keyword>
<keyword id="KW-0456">Lyase</keyword>
<reference key="1">
    <citation type="journal article" date="2008" name="J. Bacteriol.">
        <title>The complete genome sequence of Thermococcus onnurineus NA1 reveals a mixed heterotrophic and carboxydotrophic metabolism.</title>
        <authorList>
            <person name="Lee H.S."/>
            <person name="Kang S.G."/>
            <person name="Bae S.S."/>
            <person name="Lim J.K."/>
            <person name="Cho Y."/>
            <person name="Kim Y.J."/>
            <person name="Jeon J.H."/>
            <person name="Cha S.-S."/>
            <person name="Kwon K.K."/>
            <person name="Kim H.-T."/>
            <person name="Park C.-J."/>
            <person name="Lee H.-W."/>
            <person name="Kim S.I."/>
            <person name="Chun J."/>
            <person name="Colwell R.R."/>
            <person name="Kim S.-J."/>
            <person name="Lee J.-H."/>
        </authorList>
    </citation>
    <scope>NUCLEOTIDE SEQUENCE [LARGE SCALE GENOMIC DNA]</scope>
    <source>
        <strain>NA1</strain>
    </source>
</reference>